<feature type="chain" id="PRO_0000196034" description="Small ribosomal subunit protein bS1">
    <location>
        <begin position="1"/>
        <end position="557"/>
    </location>
</feature>
<feature type="domain" description="S1 motif 1" evidence="3">
    <location>
        <begin position="21"/>
        <end position="87"/>
    </location>
</feature>
<feature type="domain" description="S1 motif 2" evidence="3">
    <location>
        <begin position="105"/>
        <end position="171"/>
    </location>
</feature>
<feature type="domain" description="S1 motif 3" evidence="3">
    <location>
        <begin position="192"/>
        <end position="260"/>
    </location>
</feature>
<feature type="domain" description="S1 motif 4" evidence="3">
    <location>
        <begin position="277"/>
        <end position="347"/>
    </location>
</feature>
<feature type="domain" description="S1 motif 5" evidence="3">
    <location>
        <begin position="364"/>
        <end position="434"/>
    </location>
</feature>
<feature type="domain" description="S1 motif 6" evidence="3">
    <location>
        <begin position="451"/>
        <end position="520"/>
    </location>
</feature>
<feature type="modified residue" description="N6-acetyllysine" evidence="1">
    <location>
        <position position="229"/>
    </location>
</feature>
<feature type="modified residue" description="N6-acetyllysine" evidence="1">
    <location>
        <position position="279"/>
    </location>
</feature>
<feature type="modified residue" description="N6-acetyllysine" evidence="1">
    <location>
        <position position="363"/>
    </location>
</feature>
<accession>P0AG69</accession>
<accession>P02349</accession>
<accession>P77352</accession>
<name>RS1_ECO57</name>
<proteinExistence type="inferred from homology"/>
<reference key="1">
    <citation type="journal article" date="2001" name="Nature">
        <title>Genome sequence of enterohaemorrhagic Escherichia coli O157:H7.</title>
        <authorList>
            <person name="Perna N.T."/>
            <person name="Plunkett G. III"/>
            <person name="Burland V."/>
            <person name="Mau B."/>
            <person name="Glasner J.D."/>
            <person name="Rose D.J."/>
            <person name="Mayhew G.F."/>
            <person name="Evans P.S."/>
            <person name="Gregor J."/>
            <person name="Kirkpatrick H.A."/>
            <person name="Posfai G."/>
            <person name="Hackett J."/>
            <person name="Klink S."/>
            <person name="Boutin A."/>
            <person name="Shao Y."/>
            <person name="Miller L."/>
            <person name="Grotbeck E.J."/>
            <person name="Davis N.W."/>
            <person name="Lim A."/>
            <person name="Dimalanta E.T."/>
            <person name="Potamousis K."/>
            <person name="Apodaca J."/>
            <person name="Anantharaman T.S."/>
            <person name="Lin J."/>
            <person name="Yen G."/>
            <person name="Schwartz D.C."/>
            <person name="Welch R.A."/>
            <person name="Blattner F.R."/>
        </authorList>
    </citation>
    <scope>NUCLEOTIDE SEQUENCE [LARGE SCALE GENOMIC DNA]</scope>
    <source>
        <strain>O157:H7 / EDL933 / ATCC 700927 / EHEC</strain>
    </source>
</reference>
<reference key="2">
    <citation type="journal article" date="2001" name="DNA Res.">
        <title>Complete genome sequence of enterohemorrhagic Escherichia coli O157:H7 and genomic comparison with a laboratory strain K-12.</title>
        <authorList>
            <person name="Hayashi T."/>
            <person name="Makino K."/>
            <person name="Ohnishi M."/>
            <person name="Kurokawa K."/>
            <person name="Ishii K."/>
            <person name="Yokoyama K."/>
            <person name="Han C.-G."/>
            <person name="Ohtsubo E."/>
            <person name="Nakayama K."/>
            <person name="Murata T."/>
            <person name="Tanaka M."/>
            <person name="Tobe T."/>
            <person name="Iida T."/>
            <person name="Takami H."/>
            <person name="Honda T."/>
            <person name="Sasakawa C."/>
            <person name="Ogasawara N."/>
            <person name="Yasunaga T."/>
            <person name="Kuhara S."/>
            <person name="Shiba T."/>
            <person name="Hattori M."/>
            <person name="Shinagawa H."/>
        </authorList>
    </citation>
    <scope>NUCLEOTIDE SEQUENCE [LARGE SCALE GENOMIC DNA]</scope>
    <source>
        <strain>O157:H7 / Sakai / RIMD 0509952 / EHEC</strain>
    </source>
</reference>
<protein>
    <recommendedName>
        <fullName evidence="4">Small ribosomal subunit protein bS1</fullName>
    </recommendedName>
    <alternativeName>
        <fullName>30S ribosomal protein S1</fullName>
    </alternativeName>
</protein>
<evidence type="ECO:0000250" key="1"/>
<evidence type="ECO:0000250" key="2">
    <source>
        <dbReference type="UniProtKB" id="P0AG67"/>
    </source>
</evidence>
<evidence type="ECO:0000255" key="3">
    <source>
        <dbReference type="PROSITE-ProRule" id="PRU00180"/>
    </source>
</evidence>
<evidence type="ECO:0000305" key="4"/>
<sequence length="557" mass="61158">MTESFAQLFEESLKEIETRPGSIVRGVVVAIDKDVVLVDAGLKSESAIPAEQFKNAQGELEIQVGDEVDVALDAVEDGFGETLLSREKAKRHEAWITLEKAYEDAETVTGVINGKVKGGFTVELNGIRAFLPGSLVDVRPVRDTLHLEGKELEFKVIKLDQKRNNVVVSRRAVIESENSAERDQLLENLQEGMEVKGIVKNLTDYGAFVDLGGVDGLLHITDMAWKRVKHPSEIVNVGDEITVKVLKFDRERTRVSLGLKQLGEDPWVAIAKRYPEGTKLTGRVTNLTDYGCFVEIEEGVEGLVHVSEMDWTNKNIHPSKVVNVGDVVEVMVLDIDEERRRISLGLKQCKANPWQQFAETHNKGDRVEGKIKSITDFGIFIGLDGGIDGLVHLSDISWNVAGEEAVREYKKGDEIAAVVLQVDAERERISLGVKQLAEDPFNNWVALNKKGAIVTGKVTAVDAKGATVELADGVEGYLRASEASRDRVEDATLVLSVGDEVEAKFTGVDRKNRAISLSVRAKDEADEKDAIATVNKQEDANFSNNAMAEAFKAAKGE</sequence>
<keyword id="KW-0007">Acetylation</keyword>
<keyword id="KW-0597">Phosphoprotein</keyword>
<keyword id="KW-1185">Reference proteome</keyword>
<keyword id="KW-0677">Repeat</keyword>
<keyword id="KW-0687">Ribonucleoprotein</keyword>
<keyword id="KW-0689">Ribosomal protein</keyword>
<keyword id="KW-0694">RNA-binding</keyword>
<dbReference type="EMBL" id="AE005174">
    <property type="protein sequence ID" value="AAG55396.1"/>
    <property type="molecule type" value="Genomic_DNA"/>
</dbReference>
<dbReference type="EMBL" id="BA000007">
    <property type="protein sequence ID" value="BAB34417.1"/>
    <property type="molecule type" value="Genomic_DNA"/>
</dbReference>
<dbReference type="PIR" id="B90753">
    <property type="entry name" value="B90753"/>
</dbReference>
<dbReference type="PIR" id="H85616">
    <property type="entry name" value="H85616"/>
</dbReference>
<dbReference type="RefSeq" id="NP_309021.1">
    <property type="nucleotide sequence ID" value="NC_002695.1"/>
</dbReference>
<dbReference type="RefSeq" id="WP_000140327.1">
    <property type="nucleotide sequence ID" value="NZ_VOAI01000006.1"/>
</dbReference>
<dbReference type="BMRB" id="P0AG69"/>
<dbReference type="EMDB" id="EMD-42504"/>
<dbReference type="SMR" id="P0AG69"/>
<dbReference type="STRING" id="155864.Z1257"/>
<dbReference type="GeneID" id="917736"/>
<dbReference type="GeneID" id="93776506"/>
<dbReference type="KEGG" id="ece:Z1257"/>
<dbReference type="KEGG" id="ecs:ECs_0994"/>
<dbReference type="PATRIC" id="fig|386585.9.peg.1114"/>
<dbReference type="eggNOG" id="COG0539">
    <property type="taxonomic scope" value="Bacteria"/>
</dbReference>
<dbReference type="HOGENOM" id="CLU_015805_2_1_6"/>
<dbReference type="OMA" id="ISWDKNV"/>
<dbReference type="Proteomes" id="UP000000558">
    <property type="component" value="Chromosome"/>
</dbReference>
<dbReference type="Proteomes" id="UP000002519">
    <property type="component" value="Chromosome"/>
</dbReference>
<dbReference type="GO" id="GO:0022627">
    <property type="term" value="C:cytosolic small ribosomal subunit"/>
    <property type="evidence" value="ECO:0007669"/>
    <property type="project" value="TreeGrafter"/>
</dbReference>
<dbReference type="GO" id="GO:0003729">
    <property type="term" value="F:mRNA binding"/>
    <property type="evidence" value="ECO:0007669"/>
    <property type="project" value="TreeGrafter"/>
</dbReference>
<dbReference type="GO" id="GO:0003735">
    <property type="term" value="F:structural constituent of ribosome"/>
    <property type="evidence" value="ECO:0007669"/>
    <property type="project" value="InterPro"/>
</dbReference>
<dbReference type="GO" id="GO:0006412">
    <property type="term" value="P:translation"/>
    <property type="evidence" value="ECO:0007669"/>
    <property type="project" value="InterPro"/>
</dbReference>
<dbReference type="CDD" id="cd05687">
    <property type="entry name" value="S1_RPS1_repeat_ec1_hs1"/>
    <property type="match status" value="1"/>
</dbReference>
<dbReference type="CDD" id="cd04465">
    <property type="entry name" value="S1_RPS1_repeat_ec2_hs2"/>
    <property type="match status" value="1"/>
</dbReference>
<dbReference type="CDD" id="cd05688">
    <property type="entry name" value="S1_RPS1_repeat_ec3"/>
    <property type="match status" value="1"/>
</dbReference>
<dbReference type="CDD" id="cd05689">
    <property type="entry name" value="S1_RPS1_repeat_ec4"/>
    <property type="match status" value="1"/>
</dbReference>
<dbReference type="CDD" id="cd05690">
    <property type="entry name" value="S1_RPS1_repeat_ec5"/>
    <property type="match status" value="1"/>
</dbReference>
<dbReference type="CDD" id="cd05691">
    <property type="entry name" value="S1_RPS1_repeat_ec6"/>
    <property type="match status" value="1"/>
</dbReference>
<dbReference type="FunFam" id="2.40.50.140:FF:000011">
    <property type="entry name" value="30S ribosomal protein S1"/>
    <property type="match status" value="1"/>
</dbReference>
<dbReference type="FunFam" id="2.40.50.140:FF:000016">
    <property type="entry name" value="30S ribosomal protein S1"/>
    <property type="match status" value="1"/>
</dbReference>
<dbReference type="FunFam" id="2.40.50.140:FF:000017">
    <property type="entry name" value="30S ribosomal protein S1"/>
    <property type="match status" value="1"/>
</dbReference>
<dbReference type="FunFam" id="2.40.50.140:FF:000018">
    <property type="entry name" value="30S ribosomal protein S1"/>
    <property type="match status" value="1"/>
</dbReference>
<dbReference type="FunFam" id="2.40.50.140:FF:000021">
    <property type="entry name" value="30S ribosomal protein S1"/>
    <property type="match status" value="1"/>
</dbReference>
<dbReference type="FunFam" id="2.40.50.140:FF:000036">
    <property type="entry name" value="30S ribosomal protein S1"/>
    <property type="match status" value="1"/>
</dbReference>
<dbReference type="Gene3D" id="2.40.50.140">
    <property type="entry name" value="Nucleic acid-binding proteins"/>
    <property type="match status" value="6"/>
</dbReference>
<dbReference type="InterPro" id="IPR012340">
    <property type="entry name" value="NA-bd_OB-fold"/>
</dbReference>
<dbReference type="InterPro" id="IPR050437">
    <property type="entry name" value="Ribos_protein_bS1-like"/>
</dbReference>
<dbReference type="InterPro" id="IPR000110">
    <property type="entry name" value="Ribosomal_bS1"/>
</dbReference>
<dbReference type="InterPro" id="IPR035104">
    <property type="entry name" value="Ribosomal_protein_S1-like"/>
</dbReference>
<dbReference type="InterPro" id="IPR003029">
    <property type="entry name" value="S1_domain"/>
</dbReference>
<dbReference type="NCBIfam" id="NF004951">
    <property type="entry name" value="PRK06299.1-1"/>
    <property type="match status" value="1"/>
</dbReference>
<dbReference type="NCBIfam" id="NF004952">
    <property type="entry name" value="PRK06299.1-2"/>
    <property type="match status" value="1"/>
</dbReference>
<dbReference type="NCBIfam" id="NF004954">
    <property type="entry name" value="PRK06299.1-4"/>
    <property type="match status" value="1"/>
</dbReference>
<dbReference type="NCBIfam" id="TIGR00717">
    <property type="entry name" value="rpsA"/>
    <property type="match status" value="1"/>
</dbReference>
<dbReference type="PANTHER" id="PTHR10724">
    <property type="entry name" value="30S RIBOSOMAL PROTEIN S1"/>
    <property type="match status" value="1"/>
</dbReference>
<dbReference type="PANTHER" id="PTHR10724:SF7">
    <property type="entry name" value="SMALL RIBOSOMAL SUBUNIT PROTEIN BS1C"/>
    <property type="match status" value="1"/>
</dbReference>
<dbReference type="Pfam" id="PF00575">
    <property type="entry name" value="S1"/>
    <property type="match status" value="6"/>
</dbReference>
<dbReference type="PIRSF" id="PIRSF002111">
    <property type="entry name" value="RpsA"/>
    <property type="match status" value="1"/>
</dbReference>
<dbReference type="PRINTS" id="PR00681">
    <property type="entry name" value="RIBOSOMALS1"/>
</dbReference>
<dbReference type="SMART" id="SM00316">
    <property type="entry name" value="S1"/>
    <property type="match status" value="6"/>
</dbReference>
<dbReference type="SUPFAM" id="SSF50249">
    <property type="entry name" value="Nucleic acid-binding proteins"/>
    <property type="match status" value="6"/>
</dbReference>
<dbReference type="PROSITE" id="PS50126">
    <property type="entry name" value="S1"/>
    <property type="match status" value="6"/>
</dbReference>
<gene>
    <name type="primary">rpsA</name>
    <name type="ordered locus">Z1257</name>
    <name type="ordered locus">ECs0994</name>
</gene>
<organism>
    <name type="scientific">Escherichia coli O157:H7</name>
    <dbReference type="NCBI Taxonomy" id="83334"/>
    <lineage>
        <taxon>Bacteria</taxon>
        <taxon>Pseudomonadati</taxon>
        <taxon>Pseudomonadota</taxon>
        <taxon>Gammaproteobacteria</taxon>
        <taxon>Enterobacterales</taxon>
        <taxon>Enterobacteriaceae</taxon>
        <taxon>Escherichia</taxon>
    </lineage>
</organism>
<comment type="function">
    <text evidence="2">Required for translation of most natural mRNAs except for leaderless mRNA. Binds mRNA upstream of the Shine-Dalgarno (SD) sequence and helps it bind to the 30S ribosomal subunit; acts as an RNA chaperone to unfold structured mRNA on the ribosome but is not essential for mRNAs with strong SDs and little 5'-UTR structure, thus it may help fine-tune which mRNAs that are translated. Unwinds dsRNA by binding to transiently formed ssRNA regions; binds about 10 nucleotides. Has a preference for polypyrimidine tracts. Negatively autoregulates its own translation.</text>
</comment>
<comment type="subunit">
    <text evidence="1">Part of the 30S ribosomal subunit. Some nascent polypeptide chains are able to cross-link to this protein in situ. Can be cross-linked to mRNA in the ribosome (By similarity).</text>
</comment>
<comment type="PTM">
    <text evidence="1">Phosphorylated; probably on a serine.</text>
</comment>
<comment type="similarity">
    <text evidence="4">Belongs to the bacterial ribosomal protein bS1 family.</text>
</comment>